<sequence>MVTIVPYSHQYLKDICQLIQKDLSEPYSKYVYRYFVHQWPEFSFVALDNDRFIGAVICKQDVHRGTTLRGYIAMLAIVKEYRGQGIATKLTQASLDVMKNRGAQEIVLETEVDNEAAMSFYERLGFCRYKRLYRYYLNGTDAFRYILYPN</sequence>
<proteinExistence type="evidence at protein level"/>
<keyword id="KW-0002">3D-structure</keyword>
<keyword id="KW-0012">Acyltransferase</keyword>
<keyword id="KW-0963">Cytoplasm</keyword>
<keyword id="KW-0539">Nucleus</keyword>
<keyword id="KW-1185">Reference proteome</keyword>
<keyword id="KW-0808">Transferase</keyword>
<comment type="function">
    <text evidence="1">Catalytic component of the NatC N-terminal acetyltransferase.</text>
</comment>
<comment type="catalytic activity">
    <reaction evidence="2">
        <text>N-terminal L-methionyl-L-leucyl-[protein] + acetyl-CoA = N-terminal N(alpha)-acetyl-L-methionyl-L-leucyl-[protein] + CoA + H(+)</text>
        <dbReference type="Rhea" id="RHEA:50520"/>
        <dbReference type="Rhea" id="RHEA-COMP:12711"/>
        <dbReference type="Rhea" id="RHEA-COMP:12712"/>
        <dbReference type="ChEBI" id="CHEBI:15378"/>
        <dbReference type="ChEBI" id="CHEBI:57287"/>
        <dbReference type="ChEBI" id="CHEBI:57288"/>
        <dbReference type="ChEBI" id="CHEBI:133377"/>
        <dbReference type="ChEBI" id="CHEBI:133378"/>
        <dbReference type="EC" id="2.3.1.256"/>
    </reaction>
</comment>
<comment type="catalytic activity">
    <reaction evidence="2">
        <text>N-terminal L-methionyl-L-isoleucyl-[protein] + acetyl-CoA = N-terminal N(alpha)-acetyl-L-methionyl-L-isoleucyl-[protein] + CoA + H(+)</text>
        <dbReference type="Rhea" id="RHEA:50524"/>
        <dbReference type="Rhea" id="RHEA-COMP:12713"/>
        <dbReference type="Rhea" id="RHEA-COMP:12714"/>
        <dbReference type="ChEBI" id="CHEBI:15378"/>
        <dbReference type="ChEBI" id="CHEBI:57287"/>
        <dbReference type="ChEBI" id="CHEBI:57288"/>
        <dbReference type="ChEBI" id="CHEBI:133379"/>
        <dbReference type="ChEBI" id="CHEBI:133380"/>
        <dbReference type="EC" id="2.3.1.256"/>
    </reaction>
</comment>
<comment type="catalytic activity">
    <reaction evidence="2">
        <text>N-terminal L-methionyl-L-phenylalanyl-[protein] + acetyl-CoA = N-terminal N(alpha)-acetyl-L-methionyl-L-phenylalanyl-[protein] + CoA + H(+)</text>
        <dbReference type="Rhea" id="RHEA:50528"/>
        <dbReference type="Rhea" id="RHEA-COMP:12715"/>
        <dbReference type="Rhea" id="RHEA-COMP:12716"/>
        <dbReference type="ChEBI" id="CHEBI:15378"/>
        <dbReference type="ChEBI" id="CHEBI:57287"/>
        <dbReference type="ChEBI" id="CHEBI:57288"/>
        <dbReference type="ChEBI" id="CHEBI:133382"/>
        <dbReference type="ChEBI" id="CHEBI:133383"/>
        <dbReference type="EC" id="2.3.1.256"/>
    </reaction>
</comment>
<comment type="catalytic activity">
    <reaction evidence="2">
        <text>N-terminal L-methionyl-L-tryptophyl-[protein] + acetyl-CoA = N-terminal N(alpha)-acetyl-L-methionyl-L-tryptophyl-[protein] + CoA + H(+)</text>
        <dbReference type="Rhea" id="RHEA:50560"/>
        <dbReference type="Rhea" id="RHEA-COMP:12724"/>
        <dbReference type="Rhea" id="RHEA-COMP:12725"/>
        <dbReference type="ChEBI" id="CHEBI:15378"/>
        <dbReference type="ChEBI" id="CHEBI:57287"/>
        <dbReference type="ChEBI" id="CHEBI:57288"/>
        <dbReference type="ChEBI" id="CHEBI:133386"/>
        <dbReference type="ChEBI" id="CHEBI:133387"/>
        <dbReference type="EC" id="2.3.1.256"/>
    </reaction>
</comment>
<comment type="catalytic activity">
    <reaction evidence="2">
        <text>N-terminal L-methionyl-L-tyrosyl-[protein] + acetyl-CoA = N-terminal N(alpha)-acetyl-L-methionyl-L-tyrosyl-[protein] + CoA + H(+)</text>
        <dbReference type="Rhea" id="RHEA:50532"/>
        <dbReference type="Rhea" id="RHEA-COMP:12717"/>
        <dbReference type="Rhea" id="RHEA-COMP:12718"/>
        <dbReference type="ChEBI" id="CHEBI:15378"/>
        <dbReference type="ChEBI" id="CHEBI:57287"/>
        <dbReference type="ChEBI" id="CHEBI:57288"/>
        <dbReference type="ChEBI" id="CHEBI:133384"/>
        <dbReference type="ChEBI" id="CHEBI:133385"/>
        <dbReference type="EC" id="2.3.1.256"/>
    </reaction>
</comment>
<comment type="subcellular location">
    <subcellularLocation>
        <location evidence="4">Cytoplasm</location>
    </subcellularLocation>
    <subcellularLocation>
        <location evidence="4">Nucleus</location>
    </subcellularLocation>
</comment>
<comment type="similarity">
    <text evidence="5">Belongs to the acetyltransferase family. MAK3 subfamily.</text>
</comment>
<organism>
    <name type="scientific">Schizosaccharomyces pombe (strain 972 / ATCC 24843)</name>
    <name type="common">Fission yeast</name>
    <dbReference type="NCBI Taxonomy" id="284812"/>
    <lineage>
        <taxon>Eukaryota</taxon>
        <taxon>Fungi</taxon>
        <taxon>Dikarya</taxon>
        <taxon>Ascomycota</taxon>
        <taxon>Taphrinomycotina</taxon>
        <taxon>Schizosaccharomycetes</taxon>
        <taxon>Schizosaccharomycetales</taxon>
        <taxon>Schizosaccharomycetaceae</taxon>
        <taxon>Schizosaccharomyces</taxon>
    </lineage>
</organism>
<dbReference type="EC" id="2.3.1.256" evidence="2"/>
<dbReference type="EMBL" id="CU329671">
    <property type="protein sequence ID" value="CAA20481.1"/>
    <property type="molecule type" value="Genomic_DNA"/>
</dbReference>
<dbReference type="PIR" id="T39482">
    <property type="entry name" value="T39482"/>
</dbReference>
<dbReference type="RefSeq" id="NP_596246.1">
    <property type="nucleotide sequence ID" value="NM_001022165.2"/>
</dbReference>
<dbReference type="PDB" id="7L1K">
    <property type="method" value="EM"/>
    <property type="resolution" value="3.16 A"/>
    <property type="chains" value="A=1-150"/>
</dbReference>
<dbReference type="PDBsum" id="7L1K"/>
<dbReference type="EMDB" id="EMD-23110"/>
<dbReference type="SMR" id="O74311"/>
<dbReference type="BioGRID" id="276384">
    <property type="interactions" value="1"/>
</dbReference>
<dbReference type="FunCoup" id="O74311">
    <property type="interactions" value="21"/>
</dbReference>
<dbReference type="STRING" id="284812.O74311"/>
<dbReference type="iPTMnet" id="O74311"/>
<dbReference type="PaxDb" id="4896-SPBC15D4.06.1"/>
<dbReference type="EnsemblFungi" id="SPBC15D4.06.1">
    <property type="protein sequence ID" value="SPBC15D4.06.1:pep"/>
    <property type="gene ID" value="SPBC15D4.06"/>
</dbReference>
<dbReference type="GeneID" id="2539835"/>
<dbReference type="KEGG" id="spo:2539835"/>
<dbReference type="PomBase" id="SPBC15D4.06">
    <property type="gene designation" value="naa30"/>
</dbReference>
<dbReference type="VEuPathDB" id="FungiDB:SPBC15D4.06"/>
<dbReference type="eggNOG" id="KOG3139">
    <property type="taxonomic scope" value="Eukaryota"/>
</dbReference>
<dbReference type="HOGENOM" id="CLU_013985_0_3_1"/>
<dbReference type="InParanoid" id="O74311"/>
<dbReference type="OMA" id="EDIQYTN"/>
<dbReference type="PhylomeDB" id="O74311"/>
<dbReference type="PRO" id="PR:O74311"/>
<dbReference type="Proteomes" id="UP000002485">
    <property type="component" value="Chromosome II"/>
</dbReference>
<dbReference type="GO" id="GO:0005829">
    <property type="term" value="C:cytosol"/>
    <property type="evidence" value="ECO:0007005"/>
    <property type="project" value="PomBase"/>
</dbReference>
<dbReference type="GO" id="GO:0031417">
    <property type="term" value="C:NatC complex"/>
    <property type="evidence" value="ECO:0000314"/>
    <property type="project" value="PomBase"/>
</dbReference>
<dbReference type="GO" id="GO:0005634">
    <property type="term" value="C:nucleus"/>
    <property type="evidence" value="ECO:0007005"/>
    <property type="project" value="PomBase"/>
</dbReference>
<dbReference type="GO" id="GO:0000822">
    <property type="term" value="F:inositol hexakisphosphate binding"/>
    <property type="evidence" value="ECO:0000314"/>
    <property type="project" value="PomBase"/>
</dbReference>
<dbReference type="GO" id="GO:0120518">
    <property type="term" value="F:protein N-terminal-methionine acetyltransferase activity"/>
    <property type="evidence" value="ECO:0007669"/>
    <property type="project" value="UniProtKB-EC"/>
</dbReference>
<dbReference type="GO" id="GO:0004596">
    <property type="term" value="F:protein-N-terminal amino-acid acetyltransferase activity"/>
    <property type="evidence" value="ECO:0000314"/>
    <property type="project" value="PomBase"/>
</dbReference>
<dbReference type="GO" id="GO:0051604">
    <property type="term" value="P:protein maturation"/>
    <property type="evidence" value="ECO:0000303"/>
    <property type="project" value="PomBase"/>
</dbReference>
<dbReference type="CDD" id="cd04301">
    <property type="entry name" value="NAT_SF"/>
    <property type="match status" value="1"/>
</dbReference>
<dbReference type="FunFam" id="3.40.630.30:FF:000199">
    <property type="entry name" value="N-acetyltransferase catalytic subunit, putative"/>
    <property type="match status" value="1"/>
</dbReference>
<dbReference type="Gene3D" id="3.40.630.30">
    <property type="match status" value="1"/>
</dbReference>
<dbReference type="InterPro" id="IPR016181">
    <property type="entry name" value="Acyl_CoA_acyltransferase"/>
</dbReference>
<dbReference type="InterPro" id="IPR000182">
    <property type="entry name" value="GNAT_dom"/>
</dbReference>
<dbReference type="InterPro" id="IPR044542">
    <property type="entry name" value="NAA30-like"/>
</dbReference>
<dbReference type="PANTHER" id="PTHR45896">
    <property type="entry name" value="N-ALPHA-ACETYLTRANSFERASE 30"/>
    <property type="match status" value="1"/>
</dbReference>
<dbReference type="PANTHER" id="PTHR45896:SF1">
    <property type="entry name" value="N-ALPHA-ACETYLTRANSFERASE 30"/>
    <property type="match status" value="1"/>
</dbReference>
<dbReference type="Pfam" id="PF00583">
    <property type="entry name" value="Acetyltransf_1"/>
    <property type="match status" value="1"/>
</dbReference>
<dbReference type="SUPFAM" id="SSF55729">
    <property type="entry name" value="Acyl-CoA N-acyltransferases (Nat)"/>
    <property type="match status" value="1"/>
</dbReference>
<dbReference type="PROSITE" id="PS51186">
    <property type="entry name" value="GNAT"/>
    <property type="match status" value="1"/>
</dbReference>
<gene>
    <name type="primary">naa30</name>
    <name type="synonym">mak3</name>
    <name type="ORF">SPBC15D4.06</name>
</gene>
<evidence type="ECO:0000250" key="1">
    <source>
        <dbReference type="UniProtKB" id="Q03503"/>
    </source>
</evidence>
<evidence type="ECO:0000250" key="2">
    <source>
        <dbReference type="UniProtKB" id="Q147X3"/>
    </source>
</evidence>
<evidence type="ECO:0000255" key="3">
    <source>
        <dbReference type="PROSITE-ProRule" id="PRU00532"/>
    </source>
</evidence>
<evidence type="ECO:0000269" key="4">
    <source>
    </source>
</evidence>
<evidence type="ECO:0000305" key="5"/>
<evidence type="ECO:0007829" key="6">
    <source>
        <dbReference type="PDB" id="7L1K"/>
    </source>
</evidence>
<feature type="chain" id="PRO_0000310302" description="N-alpha-acetyltransferase 30">
    <location>
        <begin position="1"/>
        <end position="150"/>
    </location>
</feature>
<feature type="domain" description="N-acetyltransferase" evidence="3">
    <location>
        <begin position="2"/>
        <end position="150"/>
    </location>
</feature>
<feature type="strand" evidence="6">
    <location>
        <begin position="3"/>
        <end position="5"/>
    </location>
</feature>
<feature type="helix" evidence="6">
    <location>
        <begin position="9"/>
        <end position="11"/>
    </location>
</feature>
<feature type="helix" evidence="6">
    <location>
        <begin position="12"/>
        <end position="19"/>
    </location>
</feature>
<feature type="strand" evidence="6">
    <location>
        <begin position="22"/>
        <end position="25"/>
    </location>
</feature>
<feature type="helix" evidence="6">
    <location>
        <begin position="29"/>
        <end position="36"/>
    </location>
</feature>
<feature type="strand" evidence="6">
    <location>
        <begin position="44"/>
        <end position="51"/>
    </location>
</feature>
<feature type="strand" evidence="6">
    <location>
        <begin position="55"/>
        <end position="62"/>
    </location>
</feature>
<feature type="strand" evidence="6">
    <location>
        <begin position="64"/>
        <end position="66"/>
    </location>
</feature>
<feature type="strand" evidence="6">
    <location>
        <begin position="68"/>
        <end position="76"/>
    </location>
</feature>
<feature type="helix" evidence="6">
    <location>
        <begin position="79"/>
        <end position="81"/>
    </location>
</feature>
<feature type="strand" evidence="6">
    <location>
        <begin position="88"/>
        <end position="91"/>
    </location>
</feature>
<feature type="helix" evidence="6">
    <location>
        <begin position="92"/>
        <end position="100"/>
    </location>
</feature>
<feature type="strand" evidence="6">
    <location>
        <begin position="104"/>
        <end position="113"/>
    </location>
</feature>
<feature type="turn" evidence="6">
    <location>
        <begin position="116"/>
        <end position="118"/>
    </location>
</feature>
<feature type="strand" evidence="6">
    <location>
        <begin position="119"/>
        <end position="121"/>
    </location>
</feature>
<feature type="helix" evidence="6">
    <location>
        <begin position="122"/>
        <end position="124"/>
    </location>
</feature>
<feature type="strand" evidence="6">
    <location>
        <begin position="127"/>
        <end position="132"/>
    </location>
</feature>
<feature type="strand" evidence="6">
    <location>
        <begin position="142"/>
        <end position="147"/>
    </location>
</feature>
<protein>
    <recommendedName>
        <fullName>N-alpha-acetyltransferase 30</fullName>
        <ecNumber evidence="2">2.3.1.256</ecNumber>
    </recommendedName>
    <alternativeName>
        <fullName>N-terminal acetyltransferase C complex catalytic subunit mak3 homolog</fullName>
    </alternativeName>
    <alternativeName>
        <fullName>NatC catalytic subunit</fullName>
    </alternativeName>
</protein>
<name>NAA30_SCHPO</name>
<reference key="1">
    <citation type="journal article" date="2002" name="Nature">
        <title>The genome sequence of Schizosaccharomyces pombe.</title>
        <authorList>
            <person name="Wood V."/>
            <person name="Gwilliam R."/>
            <person name="Rajandream M.A."/>
            <person name="Lyne M.H."/>
            <person name="Lyne R."/>
            <person name="Stewart A."/>
            <person name="Sgouros J.G."/>
            <person name="Peat N."/>
            <person name="Hayles J."/>
            <person name="Baker S.G."/>
            <person name="Basham D."/>
            <person name="Bowman S."/>
            <person name="Brooks K."/>
            <person name="Brown D."/>
            <person name="Brown S."/>
            <person name="Chillingworth T."/>
            <person name="Churcher C.M."/>
            <person name="Collins M."/>
            <person name="Connor R."/>
            <person name="Cronin A."/>
            <person name="Davis P."/>
            <person name="Feltwell T."/>
            <person name="Fraser A."/>
            <person name="Gentles S."/>
            <person name="Goble A."/>
            <person name="Hamlin N."/>
            <person name="Harris D.E."/>
            <person name="Hidalgo J."/>
            <person name="Hodgson G."/>
            <person name="Holroyd S."/>
            <person name="Hornsby T."/>
            <person name="Howarth S."/>
            <person name="Huckle E.J."/>
            <person name="Hunt S."/>
            <person name="Jagels K."/>
            <person name="James K.D."/>
            <person name="Jones L."/>
            <person name="Jones M."/>
            <person name="Leather S."/>
            <person name="McDonald S."/>
            <person name="McLean J."/>
            <person name="Mooney P."/>
            <person name="Moule S."/>
            <person name="Mungall K.L."/>
            <person name="Murphy L.D."/>
            <person name="Niblett D."/>
            <person name="Odell C."/>
            <person name="Oliver K."/>
            <person name="O'Neil S."/>
            <person name="Pearson D."/>
            <person name="Quail M.A."/>
            <person name="Rabbinowitsch E."/>
            <person name="Rutherford K.M."/>
            <person name="Rutter S."/>
            <person name="Saunders D."/>
            <person name="Seeger K."/>
            <person name="Sharp S."/>
            <person name="Skelton J."/>
            <person name="Simmonds M.N."/>
            <person name="Squares R."/>
            <person name="Squares S."/>
            <person name="Stevens K."/>
            <person name="Taylor K."/>
            <person name="Taylor R.G."/>
            <person name="Tivey A."/>
            <person name="Walsh S.V."/>
            <person name="Warren T."/>
            <person name="Whitehead S."/>
            <person name="Woodward J.R."/>
            <person name="Volckaert G."/>
            <person name="Aert R."/>
            <person name="Robben J."/>
            <person name="Grymonprez B."/>
            <person name="Weltjens I."/>
            <person name="Vanstreels E."/>
            <person name="Rieger M."/>
            <person name="Schaefer M."/>
            <person name="Mueller-Auer S."/>
            <person name="Gabel C."/>
            <person name="Fuchs M."/>
            <person name="Duesterhoeft A."/>
            <person name="Fritzc C."/>
            <person name="Holzer E."/>
            <person name="Moestl D."/>
            <person name="Hilbert H."/>
            <person name="Borzym K."/>
            <person name="Langer I."/>
            <person name="Beck A."/>
            <person name="Lehrach H."/>
            <person name="Reinhardt R."/>
            <person name="Pohl T.M."/>
            <person name="Eger P."/>
            <person name="Zimmermann W."/>
            <person name="Wedler H."/>
            <person name="Wambutt R."/>
            <person name="Purnelle B."/>
            <person name="Goffeau A."/>
            <person name="Cadieu E."/>
            <person name="Dreano S."/>
            <person name="Gloux S."/>
            <person name="Lelaure V."/>
            <person name="Mottier S."/>
            <person name="Galibert F."/>
            <person name="Aves S.J."/>
            <person name="Xiang Z."/>
            <person name="Hunt C."/>
            <person name="Moore K."/>
            <person name="Hurst S.M."/>
            <person name="Lucas M."/>
            <person name="Rochet M."/>
            <person name="Gaillardin C."/>
            <person name="Tallada V.A."/>
            <person name="Garzon A."/>
            <person name="Thode G."/>
            <person name="Daga R.R."/>
            <person name="Cruzado L."/>
            <person name="Jimenez J."/>
            <person name="Sanchez M."/>
            <person name="del Rey F."/>
            <person name="Benito J."/>
            <person name="Dominguez A."/>
            <person name="Revuelta J.L."/>
            <person name="Moreno S."/>
            <person name="Armstrong J."/>
            <person name="Forsburg S.L."/>
            <person name="Cerutti L."/>
            <person name="Lowe T."/>
            <person name="McCombie W.R."/>
            <person name="Paulsen I."/>
            <person name="Potashkin J."/>
            <person name="Shpakovski G.V."/>
            <person name="Ussery D."/>
            <person name="Barrell B.G."/>
            <person name="Nurse P."/>
        </authorList>
    </citation>
    <scope>NUCLEOTIDE SEQUENCE [LARGE SCALE GENOMIC DNA]</scope>
    <source>
        <strain>972 / ATCC 24843</strain>
    </source>
</reference>
<reference key="2">
    <citation type="journal article" date="2006" name="Nat. Biotechnol.">
        <title>ORFeome cloning and global analysis of protein localization in the fission yeast Schizosaccharomyces pombe.</title>
        <authorList>
            <person name="Matsuyama A."/>
            <person name="Arai R."/>
            <person name="Yashiroda Y."/>
            <person name="Shirai A."/>
            <person name="Kamata A."/>
            <person name="Sekido S."/>
            <person name="Kobayashi Y."/>
            <person name="Hashimoto A."/>
            <person name="Hamamoto M."/>
            <person name="Hiraoka Y."/>
            <person name="Horinouchi S."/>
            <person name="Yoshida M."/>
        </authorList>
    </citation>
    <scope>SUBCELLULAR LOCATION [LARGE SCALE ANALYSIS]</scope>
</reference>
<accession>O74311</accession>